<reference key="1">
    <citation type="submission" date="2005-09" db="EMBL/GenBank/DDBJ databases">
        <title>Annotation of the Aspergillus terreus NIH2624 genome.</title>
        <authorList>
            <person name="Birren B.W."/>
            <person name="Lander E.S."/>
            <person name="Galagan J.E."/>
            <person name="Nusbaum C."/>
            <person name="Devon K."/>
            <person name="Henn M."/>
            <person name="Ma L.-J."/>
            <person name="Jaffe D.B."/>
            <person name="Butler J."/>
            <person name="Alvarez P."/>
            <person name="Gnerre S."/>
            <person name="Grabherr M."/>
            <person name="Kleber M."/>
            <person name="Mauceli E.W."/>
            <person name="Brockman W."/>
            <person name="Rounsley S."/>
            <person name="Young S.K."/>
            <person name="LaButti K."/>
            <person name="Pushparaj V."/>
            <person name="DeCaprio D."/>
            <person name="Crawford M."/>
            <person name="Koehrsen M."/>
            <person name="Engels R."/>
            <person name="Montgomery P."/>
            <person name="Pearson M."/>
            <person name="Howarth C."/>
            <person name="Larson L."/>
            <person name="Luoma S."/>
            <person name="White J."/>
            <person name="Alvarado L."/>
            <person name="Kodira C.D."/>
            <person name="Zeng Q."/>
            <person name="Oleary S."/>
            <person name="Yandava C."/>
            <person name="Denning D.W."/>
            <person name="Nierman W.C."/>
            <person name="Milne T."/>
            <person name="Madden K."/>
        </authorList>
    </citation>
    <scope>NUCLEOTIDE SEQUENCE [LARGE SCALE GENOMIC DNA]</scope>
    <source>
        <strain>NIH 2624 / FGSC A1156</strain>
    </source>
</reference>
<sequence>MVHAGYFVLGLLTTTVSAVNNVADLVGTWSTKSRNVLTGPGFYDPIQDKLLEPNLTGISYSFTADGYYEEAYYRALANPTNPECPRGIMQWQHGSYVVDSGGVLRLTPIEVDGRQLLSDPCAADKGIYTRYNQTETFNSFKVYVDSYHNVQRLDLQKFDDSFMHPMYLVYRPPQMLPTETLNPVSHSKKKRHVTRETHGWFRLTDLVKREEILNPDRWLWLGLFMTAVGGFTFIYS</sequence>
<evidence type="ECO:0000250" key="1"/>
<evidence type="ECO:0000255" key="2"/>
<evidence type="ECO:0000305" key="3"/>
<dbReference type="EMBL" id="CH476602">
    <property type="protein sequence ID" value="EAU32878.1"/>
    <property type="molecule type" value="Genomic_DNA"/>
</dbReference>
<dbReference type="RefSeq" id="XP_001215512.1">
    <property type="nucleotide sequence ID" value="XM_001215512.1"/>
</dbReference>
<dbReference type="STRING" id="341663.Q0CJ00"/>
<dbReference type="GlyCosmos" id="Q0CJ00">
    <property type="glycosylation" value="2 sites, No reported glycans"/>
</dbReference>
<dbReference type="EnsemblFungi" id="EAU32878">
    <property type="protein sequence ID" value="EAU32878"/>
    <property type="gene ID" value="ATEG_06334"/>
</dbReference>
<dbReference type="GeneID" id="4322283"/>
<dbReference type="VEuPathDB" id="FungiDB:ATEG_06334"/>
<dbReference type="eggNOG" id="ENOG502QQTG">
    <property type="taxonomic scope" value="Eukaryota"/>
</dbReference>
<dbReference type="HOGENOM" id="CLU_071622_0_0_1"/>
<dbReference type="OMA" id="YKPPQML"/>
<dbReference type="OrthoDB" id="5327821at2759"/>
<dbReference type="Proteomes" id="UP000007963">
    <property type="component" value="Unassembled WGS sequence"/>
</dbReference>
<dbReference type="GO" id="GO:0005789">
    <property type="term" value="C:endoplasmic reticulum membrane"/>
    <property type="evidence" value="ECO:0007669"/>
    <property type="project" value="UniProtKB-SubCell"/>
</dbReference>
<dbReference type="GO" id="GO:0051082">
    <property type="term" value="F:unfolded protein binding"/>
    <property type="evidence" value="ECO:0007669"/>
    <property type="project" value="TreeGrafter"/>
</dbReference>
<dbReference type="GO" id="GO:0006458">
    <property type="term" value="P:'de novo' protein folding"/>
    <property type="evidence" value="ECO:0007669"/>
    <property type="project" value="InterPro"/>
</dbReference>
<dbReference type="InterPro" id="IPR019623">
    <property type="entry name" value="Rot1"/>
</dbReference>
<dbReference type="PANTHER" id="PTHR28090">
    <property type="entry name" value="PROTEIN ROT1"/>
    <property type="match status" value="1"/>
</dbReference>
<dbReference type="PANTHER" id="PTHR28090:SF1">
    <property type="entry name" value="PROTEIN ROT1"/>
    <property type="match status" value="1"/>
</dbReference>
<dbReference type="Pfam" id="PF10681">
    <property type="entry name" value="Rot1"/>
    <property type="match status" value="1"/>
</dbReference>
<dbReference type="PIRSF" id="PIRSF017290">
    <property type="entry name" value="ROT1_prd"/>
    <property type="match status" value="1"/>
</dbReference>
<feature type="signal peptide" evidence="2">
    <location>
        <begin position="1"/>
        <end position="18"/>
    </location>
</feature>
<feature type="chain" id="PRO_0000333405" description="Protein rot1">
    <location>
        <begin position="19"/>
        <end position="236"/>
    </location>
</feature>
<feature type="topological domain" description="Lumenal" evidence="2">
    <location>
        <begin position="19"/>
        <end position="217"/>
    </location>
</feature>
<feature type="transmembrane region" description="Helical" evidence="2">
    <location>
        <begin position="218"/>
        <end position="235"/>
    </location>
</feature>
<feature type="topological domain" description="Cytoplasmic" evidence="2">
    <location>
        <position position="236"/>
    </location>
</feature>
<feature type="glycosylation site" description="N-linked (GlcNAc...) asparagine" evidence="2">
    <location>
        <position position="54"/>
    </location>
</feature>
<feature type="glycosylation site" description="N-linked (GlcNAc...) asparagine" evidence="2">
    <location>
        <position position="132"/>
    </location>
</feature>
<accession>Q0CJ00</accession>
<protein>
    <recommendedName>
        <fullName>Protein rot1</fullName>
    </recommendedName>
</protein>
<organism>
    <name type="scientific">Aspergillus terreus (strain NIH 2624 / FGSC A1156)</name>
    <dbReference type="NCBI Taxonomy" id="341663"/>
    <lineage>
        <taxon>Eukaryota</taxon>
        <taxon>Fungi</taxon>
        <taxon>Dikarya</taxon>
        <taxon>Ascomycota</taxon>
        <taxon>Pezizomycotina</taxon>
        <taxon>Eurotiomycetes</taxon>
        <taxon>Eurotiomycetidae</taxon>
        <taxon>Eurotiales</taxon>
        <taxon>Aspergillaceae</taxon>
        <taxon>Aspergillus</taxon>
        <taxon>Aspergillus subgen. Circumdati</taxon>
    </lineage>
</organism>
<gene>
    <name type="primary">rot1</name>
    <name type="ORF">ATEG_06334</name>
</gene>
<name>ROT1_ASPTN</name>
<proteinExistence type="inferred from homology"/>
<keyword id="KW-0256">Endoplasmic reticulum</keyword>
<keyword id="KW-0325">Glycoprotein</keyword>
<keyword id="KW-0472">Membrane</keyword>
<keyword id="KW-1185">Reference proteome</keyword>
<keyword id="KW-0732">Signal</keyword>
<keyword id="KW-0812">Transmembrane</keyword>
<keyword id="KW-1133">Transmembrane helix</keyword>
<comment type="function">
    <text evidence="1">Required for normal levels of the cell wall 1,6-beta-glucan. Involved in a protein folding machinery chaperoning proteins acting in various physiological processes including cell wall synthesis and lysis of autophagic bodies (By similarity).</text>
</comment>
<comment type="subcellular location">
    <subcellularLocation>
        <location evidence="1">Endoplasmic reticulum membrane</location>
        <topology evidence="1">Single-pass type I membrane protein</topology>
    </subcellularLocation>
</comment>
<comment type="similarity">
    <text evidence="3">Belongs to the ROT1 family.</text>
</comment>